<comment type="function">
    <text evidence="1">Catalyzes the methylation of C-1 in cobalt-precorrin-5B to form cobalt-precorrin-6A.</text>
</comment>
<comment type="catalytic activity">
    <reaction evidence="1">
        <text>Co-precorrin-5B + S-adenosyl-L-methionine = Co-precorrin-6A + S-adenosyl-L-homocysteine</text>
        <dbReference type="Rhea" id="RHEA:26285"/>
        <dbReference type="ChEBI" id="CHEBI:57856"/>
        <dbReference type="ChEBI" id="CHEBI:59789"/>
        <dbReference type="ChEBI" id="CHEBI:60063"/>
        <dbReference type="ChEBI" id="CHEBI:60064"/>
        <dbReference type="EC" id="2.1.1.195"/>
    </reaction>
</comment>
<comment type="pathway">
    <text evidence="1">Cofactor biosynthesis; adenosylcobalamin biosynthesis; cob(II)yrinate a,c-diamide from sirohydrochlorin (anaerobic route): step 6/10.</text>
</comment>
<comment type="similarity">
    <text evidence="1">Belongs to the CbiD family.</text>
</comment>
<comment type="sequence caution" evidence="2">
    <conflict type="erroneous initiation">
        <sequence resource="EMBL-CDS" id="ABB49097"/>
    </conflict>
</comment>
<proteinExistence type="inferred from homology"/>
<evidence type="ECO:0000255" key="1">
    <source>
        <dbReference type="HAMAP-Rule" id="MF_00787"/>
    </source>
</evidence>
<evidence type="ECO:0000305" key="2"/>
<reference key="1">
    <citation type="journal article" date="2006" name="Science">
        <title>Genomic islands and the ecology and evolution of Prochlorococcus.</title>
        <authorList>
            <person name="Coleman M.L."/>
            <person name="Sullivan M.B."/>
            <person name="Martiny A.C."/>
            <person name="Steglich C."/>
            <person name="Barry K."/>
            <person name="Delong E.F."/>
            <person name="Chisholm S.W."/>
        </authorList>
    </citation>
    <scope>NUCLEOTIDE SEQUENCE [LARGE SCALE GENOMIC DNA]</scope>
    <source>
        <strain>MIT 9312</strain>
    </source>
</reference>
<name>CBID_PROM9</name>
<feature type="chain" id="PRO_0000257770" description="Cobalt-precorrin-5B C(1)-methyltransferase">
    <location>
        <begin position="1"/>
        <end position="370"/>
    </location>
</feature>
<keyword id="KW-0169">Cobalamin biosynthesis</keyword>
<keyword id="KW-0489">Methyltransferase</keyword>
<keyword id="KW-0949">S-adenosyl-L-methionine</keyword>
<keyword id="KW-0808">Transferase</keyword>
<dbReference type="EC" id="2.1.1.195" evidence="1"/>
<dbReference type="EMBL" id="CP000111">
    <property type="protein sequence ID" value="ABB49097.1"/>
    <property type="status" value="ALT_INIT"/>
    <property type="molecule type" value="Genomic_DNA"/>
</dbReference>
<dbReference type="RefSeq" id="WP_036924448.1">
    <property type="nucleotide sequence ID" value="NC_007577.1"/>
</dbReference>
<dbReference type="SMR" id="Q31DE8"/>
<dbReference type="STRING" id="74546.PMT9312_0036"/>
<dbReference type="KEGG" id="pmi:PMT9312_0036"/>
<dbReference type="eggNOG" id="COG1903">
    <property type="taxonomic scope" value="Bacteria"/>
</dbReference>
<dbReference type="HOGENOM" id="CLU_041273_1_2_3"/>
<dbReference type="OrthoDB" id="6439987at2"/>
<dbReference type="UniPathway" id="UPA00148">
    <property type="reaction ID" value="UER00227"/>
</dbReference>
<dbReference type="Proteomes" id="UP000002715">
    <property type="component" value="Chromosome"/>
</dbReference>
<dbReference type="GO" id="GO:0043780">
    <property type="term" value="F:cobalt-precorrin-5B C1-methyltransferase activity"/>
    <property type="evidence" value="ECO:0007669"/>
    <property type="project" value="RHEA"/>
</dbReference>
<dbReference type="GO" id="GO:0019251">
    <property type="term" value="P:anaerobic cobalamin biosynthetic process"/>
    <property type="evidence" value="ECO:0007669"/>
    <property type="project" value="UniProtKB-UniRule"/>
</dbReference>
<dbReference type="GO" id="GO:0032259">
    <property type="term" value="P:methylation"/>
    <property type="evidence" value="ECO:0007669"/>
    <property type="project" value="UniProtKB-KW"/>
</dbReference>
<dbReference type="Gene3D" id="3.30.2110.10">
    <property type="entry name" value="CbiD-like"/>
    <property type="match status" value="1"/>
</dbReference>
<dbReference type="HAMAP" id="MF_00787">
    <property type="entry name" value="CbiD"/>
    <property type="match status" value="1"/>
</dbReference>
<dbReference type="InterPro" id="IPR002748">
    <property type="entry name" value="CbiD"/>
</dbReference>
<dbReference type="InterPro" id="IPR036074">
    <property type="entry name" value="CbiD_sf"/>
</dbReference>
<dbReference type="NCBIfam" id="TIGR00312">
    <property type="entry name" value="cbiD"/>
    <property type="match status" value="1"/>
</dbReference>
<dbReference type="PANTHER" id="PTHR35863">
    <property type="entry name" value="COBALT-PRECORRIN-5B C(1)-METHYLTRANSFERASE"/>
    <property type="match status" value="1"/>
</dbReference>
<dbReference type="PANTHER" id="PTHR35863:SF1">
    <property type="entry name" value="COBALT-PRECORRIN-5B C(1)-METHYLTRANSFERASE"/>
    <property type="match status" value="1"/>
</dbReference>
<dbReference type="Pfam" id="PF01888">
    <property type="entry name" value="CbiD"/>
    <property type="match status" value="1"/>
</dbReference>
<dbReference type="PIRSF" id="PIRSF026782">
    <property type="entry name" value="CbiD"/>
    <property type="match status" value="1"/>
</dbReference>
<dbReference type="SUPFAM" id="SSF111342">
    <property type="entry name" value="CbiD-like"/>
    <property type="match status" value="1"/>
</dbReference>
<organism>
    <name type="scientific">Prochlorococcus marinus (strain MIT 9312)</name>
    <dbReference type="NCBI Taxonomy" id="74546"/>
    <lineage>
        <taxon>Bacteria</taxon>
        <taxon>Bacillati</taxon>
        <taxon>Cyanobacteriota</taxon>
        <taxon>Cyanophyceae</taxon>
        <taxon>Synechococcales</taxon>
        <taxon>Prochlorococcaceae</taxon>
        <taxon>Prochlorococcus</taxon>
    </lineage>
</organism>
<gene>
    <name evidence="1" type="primary">cbiD</name>
    <name type="ordered locus">PMT9312_0036</name>
</gene>
<sequence>MKKGFSLPLWVAGAARSALKKLVGLPFDNYELIKIPNEKKEIKIEIHSVGLLKDDSHALGISFAKSGLYLDITQNLEIWTIASLERNSFNNPLQTNPINIIAGSGVGIKEDTSEICISDFAKEVLYENLLDIIPEGFNLKLEIIFPNGVFLAERTSNKSFGIVDGLSIIGTSAETYSSASPDQLEEAKTNLAKLVQNDFKGKVVFVIGENGLNLAKNCNLKFPILKVGNWIGPLIVDAAIKKVKTVILFGYHGKLIKLAGGIFHTHNHLADGRIEILVYLAVQEKVPTEIIVQLSHLKNLEEALLLLERFDKSIAEKLFLNLSNTIEKRSFTYVNRYVKTDMEIASIIFDRKREIRWAGTYGNKYISDFQ</sequence>
<protein>
    <recommendedName>
        <fullName evidence="1">Cobalt-precorrin-5B C(1)-methyltransferase</fullName>
        <ecNumber evidence="1">2.1.1.195</ecNumber>
    </recommendedName>
    <alternativeName>
        <fullName evidence="1">Cobalt-precorrin-6A synthase</fullName>
    </alternativeName>
</protein>
<accession>Q31DE8</accession>